<reference key="1">
    <citation type="submission" date="2007-07" db="EMBL/GenBank/DDBJ databases">
        <title>Genome sequence of Campylobacter curvus 525.92 isolated from human feces.</title>
        <authorList>
            <person name="Fouts D.E."/>
            <person name="Mongodin E.F."/>
            <person name="Puiu D."/>
            <person name="Sebastian Y."/>
            <person name="Miller W.G."/>
            <person name="Mandrell R.E."/>
            <person name="Lastovica A.J."/>
            <person name="Nelson K.E."/>
        </authorList>
    </citation>
    <scope>NUCLEOTIDE SEQUENCE [LARGE SCALE GENOMIC DNA]</scope>
    <source>
        <strain>525.92</strain>
    </source>
</reference>
<comment type="function">
    <text evidence="1">Catalyzes the initial step of the lipid cycle reactions in the biosynthesis of the cell wall peptidoglycan: transfers peptidoglycan precursor phospho-MurNAc-pentapeptide from UDP-MurNAc-pentapeptide onto the lipid carrier undecaprenyl phosphate, yielding undecaprenyl-pyrophosphoryl-MurNAc-pentapeptide, known as lipid I.</text>
</comment>
<comment type="catalytic activity">
    <reaction evidence="1">
        <text>UDP-N-acetyl-alpha-D-muramoyl-L-alanyl-gamma-D-glutamyl-meso-2,6-diaminopimeloyl-D-alanyl-D-alanine + di-trans,octa-cis-undecaprenyl phosphate = di-trans,octa-cis-undecaprenyl diphospho-N-acetyl-alpha-D-muramoyl-L-alanyl-D-glutamyl-meso-2,6-diaminopimeloyl-D-alanyl-D-alanine + UMP</text>
        <dbReference type="Rhea" id="RHEA:28386"/>
        <dbReference type="ChEBI" id="CHEBI:57865"/>
        <dbReference type="ChEBI" id="CHEBI:60392"/>
        <dbReference type="ChEBI" id="CHEBI:61386"/>
        <dbReference type="ChEBI" id="CHEBI:61387"/>
        <dbReference type="EC" id="2.7.8.13"/>
    </reaction>
</comment>
<comment type="cofactor">
    <cofactor evidence="1">
        <name>Mg(2+)</name>
        <dbReference type="ChEBI" id="CHEBI:18420"/>
    </cofactor>
</comment>
<comment type="pathway">
    <text evidence="1">Cell wall biogenesis; peptidoglycan biosynthesis.</text>
</comment>
<comment type="subcellular location">
    <subcellularLocation>
        <location evidence="1">Cell inner membrane</location>
        <topology evidence="1">Multi-pass membrane protein</topology>
    </subcellularLocation>
</comment>
<comment type="similarity">
    <text evidence="1">Belongs to the glycosyltransferase 4 family. MraY subfamily.</text>
</comment>
<feature type="chain" id="PRO_1000002954" description="Phospho-N-acetylmuramoyl-pentapeptide-transferase">
    <location>
        <begin position="1"/>
        <end position="354"/>
    </location>
</feature>
<feature type="transmembrane region" description="Helical" evidence="1">
    <location>
        <begin position="23"/>
        <end position="43"/>
    </location>
</feature>
<feature type="transmembrane region" description="Helical" evidence="1">
    <location>
        <begin position="66"/>
        <end position="86"/>
    </location>
</feature>
<feature type="transmembrane region" description="Helical" evidence="1">
    <location>
        <begin position="88"/>
        <end position="108"/>
    </location>
</feature>
<feature type="transmembrane region" description="Helical" evidence="1">
    <location>
        <begin position="130"/>
        <end position="150"/>
    </location>
</feature>
<feature type="transmembrane region" description="Helical" evidence="1">
    <location>
        <begin position="161"/>
        <end position="181"/>
    </location>
</feature>
<feature type="transmembrane region" description="Helical" evidence="1">
    <location>
        <begin position="193"/>
        <end position="213"/>
    </location>
</feature>
<feature type="transmembrane region" description="Helical" evidence="1">
    <location>
        <begin position="230"/>
        <end position="250"/>
    </location>
</feature>
<feature type="transmembrane region" description="Helical" evidence="1">
    <location>
        <begin position="257"/>
        <end position="277"/>
    </location>
</feature>
<feature type="transmembrane region" description="Helical" evidence="1">
    <location>
        <begin position="282"/>
        <end position="302"/>
    </location>
</feature>
<feature type="transmembrane region" description="Helical" evidence="1">
    <location>
        <begin position="331"/>
        <end position="351"/>
    </location>
</feature>
<name>MRAY_CAMC5</name>
<keyword id="KW-0131">Cell cycle</keyword>
<keyword id="KW-0132">Cell division</keyword>
<keyword id="KW-0997">Cell inner membrane</keyword>
<keyword id="KW-1003">Cell membrane</keyword>
<keyword id="KW-0133">Cell shape</keyword>
<keyword id="KW-0961">Cell wall biogenesis/degradation</keyword>
<keyword id="KW-0460">Magnesium</keyword>
<keyword id="KW-0472">Membrane</keyword>
<keyword id="KW-0479">Metal-binding</keyword>
<keyword id="KW-0573">Peptidoglycan synthesis</keyword>
<keyword id="KW-1185">Reference proteome</keyword>
<keyword id="KW-0808">Transferase</keyword>
<keyword id="KW-0812">Transmembrane</keyword>
<keyword id="KW-1133">Transmembrane helix</keyword>
<organism>
    <name type="scientific">Campylobacter curvus (strain 525.92)</name>
    <dbReference type="NCBI Taxonomy" id="360105"/>
    <lineage>
        <taxon>Bacteria</taxon>
        <taxon>Pseudomonadati</taxon>
        <taxon>Campylobacterota</taxon>
        <taxon>Epsilonproteobacteria</taxon>
        <taxon>Campylobacterales</taxon>
        <taxon>Campylobacteraceae</taxon>
        <taxon>Campylobacter</taxon>
    </lineage>
</organism>
<accession>A7GWQ7</accession>
<sequence>MFYYIYELLNFNIFQYITVRAGFSFFIAFCLTVYLMPKFIAWAKAKNAAQPIYELAPQTHQKKAKTPTMGGLVFIGAAVFATLLCARLDNVFVVASLLCLVGFSALGFKDDLNKILGGKNHDGLSPRAKLAVQVLIGLVVSSLLYFHGELGSKFYLPFYKFALLDLGVFAIVFWTIVIVAASNAVNLTDGLDGLASVPAIFSLLTLGVFAYICGHAVFSTYLLLPKIVGVGETVIIAAALIGSLMGFLWFNCHPAEVFMGDSGSLSVGAYIGLMGVMTKNEILLIIIGFVFVMETLSVILQVGSFKIFKKRIFLMAPIHHHFEIKGWVENKIIVRFWLIAILANLIALTALKIR</sequence>
<evidence type="ECO:0000255" key="1">
    <source>
        <dbReference type="HAMAP-Rule" id="MF_00038"/>
    </source>
</evidence>
<proteinExistence type="inferred from homology"/>
<protein>
    <recommendedName>
        <fullName evidence="1">Phospho-N-acetylmuramoyl-pentapeptide-transferase</fullName>
        <ecNumber evidence="1">2.7.8.13</ecNumber>
    </recommendedName>
    <alternativeName>
        <fullName evidence="1">UDP-MurNAc-pentapeptide phosphotransferase</fullName>
    </alternativeName>
</protein>
<dbReference type="EC" id="2.7.8.13" evidence="1"/>
<dbReference type="EMBL" id="CP000767">
    <property type="protein sequence ID" value="EAT99640.1"/>
    <property type="molecule type" value="Genomic_DNA"/>
</dbReference>
<dbReference type="RefSeq" id="WP_011991862.1">
    <property type="nucleotide sequence ID" value="NC_009715.2"/>
</dbReference>
<dbReference type="SMR" id="A7GWQ7"/>
<dbReference type="STRING" id="360105.CCV52592_1045"/>
<dbReference type="KEGG" id="ccv:CCV52592_1045"/>
<dbReference type="HOGENOM" id="CLU_023982_0_0_7"/>
<dbReference type="OrthoDB" id="9805475at2"/>
<dbReference type="UniPathway" id="UPA00219"/>
<dbReference type="Proteomes" id="UP000006380">
    <property type="component" value="Chromosome"/>
</dbReference>
<dbReference type="GO" id="GO:0005886">
    <property type="term" value="C:plasma membrane"/>
    <property type="evidence" value="ECO:0007669"/>
    <property type="project" value="UniProtKB-SubCell"/>
</dbReference>
<dbReference type="GO" id="GO:0046872">
    <property type="term" value="F:metal ion binding"/>
    <property type="evidence" value="ECO:0007669"/>
    <property type="project" value="UniProtKB-KW"/>
</dbReference>
<dbReference type="GO" id="GO:0008963">
    <property type="term" value="F:phospho-N-acetylmuramoyl-pentapeptide-transferase activity"/>
    <property type="evidence" value="ECO:0007669"/>
    <property type="project" value="UniProtKB-UniRule"/>
</dbReference>
<dbReference type="GO" id="GO:0051992">
    <property type="term" value="F:UDP-N-acetylmuramoyl-L-alanyl-D-glutamyl-meso-2,6-diaminopimelyl-D-alanyl-D-alanine:undecaprenyl-phosphate transferase activity"/>
    <property type="evidence" value="ECO:0007669"/>
    <property type="project" value="RHEA"/>
</dbReference>
<dbReference type="GO" id="GO:0051301">
    <property type="term" value="P:cell division"/>
    <property type="evidence" value="ECO:0007669"/>
    <property type="project" value="UniProtKB-KW"/>
</dbReference>
<dbReference type="GO" id="GO:0071555">
    <property type="term" value="P:cell wall organization"/>
    <property type="evidence" value="ECO:0007669"/>
    <property type="project" value="UniProtKB-KW"/>
</dbReference>
<dbReference type="GO" id="GO:0009252">
    <property type="term" value="P:peptidoglycan biosynthetic process"/>
    <property type="evidence" value="ECO:0007669"/>
    <property type="project" value="UniProtKB-UniRule"/>
</dbReference>
<dbReference type="GO" id="GO:0008360">
    <property type="term" value="P:regulation of cell shape"/>
    <property type="evidence" value="ECO:0007669"/>
    <property type="project" value="UniProtKB-KW"/>
</dbReference>
<dbReference type="CDD" id="cd06852">
    <property type="entry name" value="GT_MraY"/>
    <property type="match status" value="1"/>
</dbReference>
<dbReference type="HAMAP" id="MF_00038">
    <property type="entry name" value="MraY"/>
    <property type="match status" value="1"/>
</dbReference>
<dbReference type="InterPro" id="IPR000715">
    <property type="entry name" value="Glycosyl_transferase_4"/>
</dbReference>
<dbReference type="InterPro" id="IPR003524">
    <property type="entry name" value="PNAcMuramoyl-5peptid_Trfase"/>
</dbReference>
<dbReference type="InterPro" id="IPR018480">
    <property type="entry name" value="PNAcMuramoyl-5peptid_Trfase_CS"/>
</dbReference>
<dbReference type="NCBIfam" id="TIGR00445">
    <property type="entry name" value="mraY"/>
    <property type="match status" value="1"/>
</dbReference>
<dbReference type="PANTHER" id="PTHR22926">
    <property type="entry name" value="PHOSPHO-N-ACETYLMURAMOYL-PENTAPEPTIDE-TRANSFERASE"/>
    <property type="match status" value="1"/>
</dbReference>
<dbReference type="PANTHER" id="PTHR22926:SF5">
    <property type="entry name" value="PHOSPHO-N-ACETYLMURAMOYL-PENTAPEPTIDE-TRANSFERASE HOMOLOG"/>
    <property type="match status" value="1"/>
</dbReference>
<dbReference type="Pfam" id="PF00953">
    <property type="entry name" value="Glycos_transf_4"/>
    <property type="match status" value="1"/>
</dbReference>
<dbReference type="Pfam" id="PF10555">
    <property type="entry name" value="MraY_sig1"/>
    <property type="match status" value="1"/>
</dbReference>
<dbReference type="PROSITE" id="PS01347">
    <property type="entry name" value="MRAY_1"/>
    <property type="match status" value="1"/>
</dbReference>
<dbReference type="PROSITE" id="PS01348">
    <property type="entry name" value="MRAY_2"/>
    <property type="match status" value="1"/>
</dbReference>
<gene>
    <name evidence="1" type="primary">mraY</name>
    <name type="ordered locus">Ccur92_03450</name>
    <name type="ORF">CCV52592_1045</name>
</gene>